<gene>
    <name evidence="1" type="primary">mraY</name>
    <name type="ordered locus">Psyr_4105</name>
</gene>
<reference key="1">
    <citation type="journal article" date="2005" name="Proc. Natl. Acad. Sci. U.S.A.">
        <title>Comparison of the complete genome sequences of Pseudomonas syringae pv. syringae B728a and pv. tomato DC3000.</title>
        <authorList>
            <person name="Feil H."/>
            <person name="Feil W.S."/>
            <person name="Chain P."/>
            <person name="Larimer F."/>
            <person name="Dibartolo G."/>
            <person name="Copeland A."/>
            <person name="Lykidis A."/>
            <person name="Trong S."/>
            <person name="Nolan M."/>
            <person name="Goltsman E."/>
            <person name="Thiel J."/>
            <person name="Malfatti S."/>
            <person name="Loper J.E."/>
            <person name="Lapidus A."/>
            <person name="Detter J.C."/>
            <person name="Land M."/>
            <person name="Richardson P.M."/>
            <person name="Kyrpides N.C."/>
            <person name="Ivanova N."/>
            <person name="Lindow S.E."/>
        </authorList>
    </citation>
    <scope>NUCLEOTIDE SEQUENCE [LARGE SCALE GENOMIC DNA]</scope>
    <source>
        <strain>B728a</strain>
    </source>
</reference>
<organism>
    <name type="scientific">Pseudomonas syringae pv. syringae (strain B728a)</name>
    <dbReference type="NCBI Taxonomy" id="205918"/>
    <lineage>
        <taxon>Bacteria</taxon>
        <taxon>Pseudomonadati</taxon>
        <taxon>Pseudomonadota</taxon>
        <taxon>Gammaproteobacteria</taxon>
        <taxon>Pseudomonadales</taxon>
        <taxon>Pseudomonadaceae</taxon>
        <taxon>Pseudomonas</taxon>
        <taxon>Pseudomonas syringae</taxon>
    </lineage>
</organism>
<sequence length="360" mass="39484">MLLLLAEFLQQFYKGFAVFQYLSLRGILGVLTALTLSLCLGPWMIRTLQMRQIGQSVRNDGPQSHLSKSGTPTMGGALILSSIGISTLLWADLSNRYVWVVLLVTFLFGAIGWVDDYRKVIEKNSRGLPSRWKYFWQSVFGLCAAIFLYTTAPSATETTLIVPMLKDVRIPLGIGFIVLTYFVIVGSSNAVNLTDGLDGLAIMPTVMVGGALGIFCYLSGNVKFAEYLLIPYVPGAGELIVFSGALIGAGLGFLWFNTYPAQVFMGDVGALALGAALGTMAVIVRQEMVLFIMGGVFVMETLSVVIQVASFKLTGRRVFRMAPIHHHFELKGWPEPRVIVRFWIITVILVLIGLATLKLR</sequence>
<name>MRAY_PSEU2</name>
<dbReference type="EC" id="2.7.8.13" evidence="1"/>
<dbReference type="EMBL" id="CP000075">
    <property type="protein sequence ID" value="AAY39135.1"/>
    <property type="molecule type" value="Genomic_DNA"/>
</dbReference>
<dbReference type="RefSeq" id="WP_003313553.1">
    <property type="nucleotide sequence ID" value="NC_007005.1"/>
</dbReference>
<dbReference type="RefSeq" id="YP_237173.1">
    <property type="nucleotide sequence ID" value="NC_007005.1"/>
</dbReference>
<dbReference type="SMR" id="Q4ZNY7"/>
<dbReference type="STRING" id="205918.Psyr_4105"/>
<dbReference type="GeneID" id="77279968"/>
<dbReference type="KEGG" id="psb:Psyr_4105"/>
<dbReference type="PATRIC" id="fig|205918.7.peg.4223"/>
<dbReference type="eggNOG" id="COG0472">
    <property type="taxonomic scope" value="Bacteria"/>
</dbReference>
<dbReference type="HOGENOM" id="CLU_023982_0_0_6"/>
<dbReference type="OrthoDB" id="9805475at2"/>
<dbReference type="UniPathway" id="UPA00219"/>
<dbReference type="Proteomes" id="UP000000426">
    <property type="component" value="Chromosome"/>
</dbReference>
<dbReference type="GO" id="GO:0005886">
    <property type="term" value="C:plasma membrane"/>
    <property type="evidence" value="ECO:0007669"/>
    <property type="project" value="UniProtKB-SubCell"/>
</dbReference>
<dbReference type="GO" id="GO:0046872">
    <property type="term" value="F:metal ion binding"/>
    <property type="evidence" value="ECO:0007669"/>
    <property type="project" value="UniProtKB-KW"/>
</dbReference>
<dbReference type="GO" id="GO:0008963">
    <property type="term" value="F:phospho-N-acetylmuramoyl-pentapeptide-transferase activity"/>
    <property type="evidence" value="ECO:0007669"/>
    <property type="project" value="UniProtKB-UniRule"/>
</dbReference>
<dbReference type="GO" id="GO:0051992">
    <property type="term" value="F:UDP-N-acetylmuramoyl-L-alanyl-D-glutamyl-meso-2,6-diaminopimelyl-D-alanyl-D-alanine:undecaprenyl-phosphate transferase activity"/>
    <property type="evidence" value="ECO:0007669"/>
    <property type="project" value="RHEA"/>
</dbReference>
<dbReference type="GO" id="GO:0051301">
    <property type="term" value="P:cell division"/>
    <property type="evidence" value="ECO:0007669"/>
    <property type="project" value="UniProtKB-KW"/>
</dbReference>
<dbReference type="GO" id="GO:0071555">
    <property type="term" value="P:cell wall organization"/>
    <property type="evidence" value="ECO:0007669"/>
    <property type="project" value="UniProtKB-KW"/>
</dbReference>
<dbReference type="GO" id="GO:0009252">
    <property type="term" value="P:peptidoglycan biosynthetic process"/>
    <property type="evidence" value="ECO:0007669"/>
    <property type="project" value="UniProtKB-UniRule"/>
</dbReference>
<dbReference type="GO" id="GO:0008360">
    <property type="term" value="P:regulation of cell shape"/>
    <property type="evidence" value="ECO:0007669"/>
    <property type="project" value="UniProtKB-KW"/>
</dbReference>
<dbReference type="CDD" id="cd06852">
    <property type="entry name" value="GT_MraY"/>
    <property type="match status" value="1"/>
</dbReference>
<dbReference type="HAMAP" id="MF_00038">
    <property type="entry name" value="MraY"/>
    <property type="match status" value="1"/>
</dbReference>
<dbReference type="InterPro" id="IPR000715">
    <property type="entry name" value="Glycosyl_transferase_4"/>
</dbReference>
<dbReference type="InterPro" id="IPR003524">
    <property type="entry name" value="PNAcMuramoyl-5peptid_Trfase"/>
</dbReference>
<dbReference type="InterPro" id="IPR018480">
    <property type="entry name" value="PNAcMuramoyl-5peptid_Trfase_CS"/>
</dbReference>
<dbReference type="NCBIfam" id="TIGR00445">
    <property type="entry name" value="mraY"/>
    <property type="match status" value="1"/>
</dbReference>
<dbReference type="PANTHER" id="PTHR22926">
    <property type="entry name" value="PHOSPHO-N-ACETYLMURAMOYL-PENTAPEPTIDE-TRANSFERASE"/>
    <property type="match status" value="1"/>
</dbReference>
<dbReference type="PANTHER" id="PTHR22926:SF5">
    <property type="entry name" value="PHOSPHO-N-ACETYLMURAMOYL-PENTAPEPTIDE-TRANSFERASE HOMOLOG"/>
    <property type="match status" value="1"/>
</dbReference>
<dbReference type="Pfam" id="PF00953">
    <property type="entry name" value="Glycos_transf_4"/>
    <property type="match status" value="1"/>
</dbReference>
<dbReference type="Pfam" id="PF10555">
    <property type="entry name" value="MraY_sig1"/>
    <property type="match status" value="1"/>
</dbReference>
<dbReference type="PROSITE" id="PS01347">
    <property type="entry name" value="MRAY_1"/>
    <property type="match status" value="1"/>
</dbReference>
<dbReference type="PROSITE" id="PS01348">
    <property type="entry name" value="MRAY_2"/>
    <property type="match status" value="1"/>
</dbReference>
<proteinExistence type="inferred from homology"/>
<keyword id="KW-0131">Cell cycle</keyword>
<keyword id="KW-0132">Cell division</keyword>
<keyword id="KW-0997">Cell inner membrane</keyword>
<keyword id="KW-1003">Cell membrane</keyword>
<keyword id="KW-0133">Cell shape</keyword>
<keyword id="KW-0961">Cell wall biogenesis/degradation</keyword>
<keyword id="KW-0460">Magnesium</keyword>
<keyword id="KW-0472">Membrane</keyword>
<keyword id="KW-0479">Metal-binding</keyword>
<keyword id="KW-0573">Peptidoglycan synthesis</keyword>
<keyword id="KW-0808">Transferase</keyword>
<keyword id="KW-0812">Transmembrane</keyword>
<keyword id="KW-1133">Transmembrane helix</keyword>
<feature type="chain" id="PRO_0000235472" description="Phospho-N-acetylmuramoyl-pentapeptide-transferase">
    <location>
        <begin position="1"/>
        <end position="360"/>
    </location>
</feature>
<feature type="transmembrane region" description="Helical" evidence="1">
    <location>
        <begin position="25"/>
        <end position="45"/>
    </location>
</feature>
<feature type="transmembrane region" description="Helical" evidence="1">
    <location>
        <begin position="73"/>
        <end position="93"/>
    </location>
</feature>
<feature type="transmembrane region" description="Helical" evidence="1">
    <location>
        <begin position="97"/>
        <end position="117"/>
    </location>
</feature>
<feature type="transmembrane region" description="Helical" evidence="1">
    <location>
        <begin position="135"/>
        <end position="155"/>
    </location>
</feature>
<feature type="transmembrane region" description="Helical" evidence="1">
    <location>
        <begin position="170"/>
        <end position="190"/>
    </location>
</feature>
<feature type="transmembrane region" description="Helical" evidence="1">
    <location>
        <begin position="199"/>
        <end position="219"/>
    </location>
</feature>
<feature type="transmembrane region" description="Helical" evidence="1">
    <location>
        <begin position="236"/>
        <end position="256"/>
    </location>
</feature>
<feature type="transmembrane region" description="Helical" evidence="1">
    <location>
        <begin position="263"/>
        <end position="283"/>
    </location>
</feature>
<feature type="transmembrane region" description="Helical" evidence="1">
    <location>
        <begin position="288"/>
        <end position="308"/>
    </location>
</feature>
<feature type="transmembrane region" description="Helical" evidence="1">
    <location>
        <begin position="338"/>
        <end position="358"/>
    </location>
</feature>
<comment type="function">
    <text evidence="1">Catalyzes the initial step of the lipid cycle reactions in the biosynthesis of the cell wall peptidoglycan: transfers peptidoglycan precursor phospho-MurNAc-pentapeptide from UDP-MurNAc-pentapeptide onto the lipid carrier undecaprenyl phosphate, yielding undecaprenyl-pyrophosphoryl-MurNAc-pentapeptide, known as lipid I.</text>
</comment>
<comment type="catalytic activity">
    <reaction evidence="1">
        <text>UDP-N-acetyl-alpha-D-muramoyl-L-alanyl-gamma-D-glutamyl-meso-2,6-diaminopimeloyl-D-alanyl-D-alanine + di-trans,octa-cis-undecaprenyl phosphate = di-trans,octa-cis-undecaprenyl diphospho-N-acetyl-alpha-D-muramoyl-L-alanyl-D-glutamyl-meso-2,6-diaminopimeloyl-D-alanyl-D-alanine + UMP</text>
        <dbReference type="Rhea" id="RHEA:28386"/>
        <dbReference type="ChEBI" id="CHEBI:57865"/>
        <dbReference type="ChEBI" id="CHEBI:60392"/>
        <dbReference type="ChEBI" id="CHEBI:61386"/>
        <dbReference type="ChEBI" id="CHEBI:61387"/>
        <dbReference type="EC" id="2.7.8.13"/>
    </reaction>
</comment>
<comment type="cofactor">
    <cofactor evidence="1">
        <name>Mg(2+)</name>
        <dbReference type="ChEBI" id="CHEBI:18420"/>
    </cofactor>
</comment>
<comment type="pathway">
    <text evidence="1">Cell wall biogenesis; peptidoglycan biosynthesis.</text>
</comment>
<comment type="subcellular location">
    <subcellularLocation>
        <location evidence="1">Cell inner membrane</location>
        <topology evidence="1">Multi-pass membrane protein</topology>
    </subcellularLocation>
</comment>
<comment type="similarity">
    <text evidence="1">Belongs to the glycosyltransferase 4 family. MraY subfamily.</text>
</comment>
<evidence type="ECO:0000255" key="1">
    <source>
        <dbReference type="HAMAP-Rule" id="MF_00038"/>
    </source>
</evidence>
<accession>Q4ZNY7</accession>
<protein>
    <recommendedName>
        <fullName evidence="1">Phospho-N-acetylmuramoyl-pentapeptide-transferase</fullName>
        <ecNumber evidence="1">2.7.8.13</ecNumber>
    </recommendedName>
    <alternativeName>
        <fullName evidence="1">UDP-MurNAc-pentapeptide phosphotransferase</fullName>
    </alternativeName>
</protein>